<gene>
    <name evidence="1" type="primary">der</name>
    <name type="synonym">engA</name>
    <name type="ordered locus">P9211_03881</name>
</gene>
<protein>
    <recommendedName>
        <fullName evidence="1">GTPase Der</fullName>
    </recommendedName>
    <alternativeName>
        <fullName evidence="1">GTP-binding protein EngA</fullName>
    </alternativeName>
</protein>
<reference key="1">
    <citation type="journal article" date="2007" name="PLoS Genet.">
        <title>Patterns and implications of gene gain and loss in the evolution of Prochlorococcus.</title>
        <authorList>
            <person name="Kettler G.C."/>
            <person name="Martiny A.C."/>
            <person name="Huang K."/>
            <person name="Zucker J."/>
            <person name="Coleman M.L."/>
            <person name="Rodrigue S."/>
            <person name="Chen F."/>
            <person name="Lapidus A."/>
            <person name="Ferriera S."/>
            <person name="Johnson J."/>
            <person name="Steglich C."/>
            <person name="Church G.M."/>
            <person name="Richardson P."/>
            <person name="Chisholm S.W."/>
        </authorList>
    </citation>
    <scope>NUCLEOTIDE SEQUENCE [LARGE SCALE GENOMIC DNA]</scope>
    <source>
        <strain>MIT 9211</strain>
    </source>
</reference>
<proteinExistence type="inferred from homology"/>
<accession>A9BE09</accession>
<keyword id="KW-0342">GTP-binding</keyword>
<keyword id="KW-0547">Nucleotide-binding</keyword>
<keyword id="KW-1185">Reference proteome</keyword>
<keyword id="KW-0677">Repeat</keyword>
<keyword id="KW-0690">Ribosome biogenesis</keyword>
<name>DER_PROM4</name>
<comment type="function">
    <text evidence="1">GTPase that plays an essential role in the late steps of ribosome biogenesis.</text>
</comment>
<comment type="subunit">
    <text evidence="1">Associates with the 50S ribosomal subunit.</text>
</comment>
<comment type="similarity">
    <text evidence="1">Belongs to the TRAFAC class TrmE-Era-EngA-EngB-Septin-like GTPase superfamily. EngA (Der) GTPase family.</text>
</comment>
<organism>
    <name type="scientific">Prochlorococcus marinus (strain MIT 9211)</name>
    <dbReference type="NCBI Taxonomy" id="93059"/>
    <lineage>
        <taxon>Bacteria</taxon>
        <taxon>Bacillati</taxon>
        <taxon>Cyanobacteriota</taxon>
        <taxon>Cyanophyceae</taxon>
        <taxon>Synechococcales</taxon>
        <taxon>Prochlorococcaceae</taxon>
        <taxon>Prochlorococcus</taxon>
    </lineage>
</organism>
<sequence length="456" mass="50924">MGRPIVAIIGRPNVGKSTLVNRLCGSREAIVDDQPGVTRDRTYQDAFWADREFKVVDTGGLVFDDESEFLPEIRQQAKLALSEASVALIVVDGQEGVTTADKEIASWLRHCECPTLVAVNKCESPEQGLAMAADFWSLGLGEPYPVSAIHGSGTGELLDQVILLLPSKESSEEEDEPIQLAIIGRPNVGKSSLLNSICGETRAIVSSIRGTTRDTIDTLLKREQQAWKLIDTAGIRRRRSVSYGPEYFGINRSLKAIERSDVCLLVIDALDGVTEQDQRLAGRIEQEGKACLVVVNKWDAVEKDTYTMPLMEKELRSKLYFLDWADMLFTSALTGQRVQLIFNLASLAVEQHRRRVSTSVVNEVLSEALTWRSPPTTRGGRQGRLYYGTQVSTQPPSFSLFVNEPKLFGDSYRRYIERQLREGLGFEGTPLKLFWRGKQQRAAQKDLARQKENLSK</sequence>
<dbReference type="EMBL" id="CP000878">
    <property type="protein sequence ID" value="ABX08319.1"/>
    <property type="molecule type" value="Genomic_DNA"/>
</dbReference>
<dbReference type="RefSeq" id="WP_012194942.1">
    <property type="nucleotide sequence ID" value="NC_009976.1"/>
</dbReference>
<dbReference type="SMR" id="A9BE09"/>
<dbReference type="STRING" id="93059.P9211_03881"/>
<dbReference type="KEGG" id="pmj:P9211_03881"/>
<dbReference type="eggNOG" id="COG1160">
    <property type="taxonomic scope" value="Bacteria"/>
</dbReference>
<dbReference type="HOGENOM" id="CLU_016077_6_2_3"/>
<dbReference type="OrthoDB" id="9805918at2"/>
<dbReference type="Proteomes" id="UP000000788">
    <property type="component" value="Chromosome"/>
</dbReference>
<dbReference type="GO" id="GO:0005525">
    <property type="term" value="F:GTP binding"/>
    <property type="evidence" value="ECO:0007669"/>
    <property type="project" value="UniProtKB-UniRule"/>
</dbReference>
<dbReference type="GO" id="GO:0043022">
    <property type="term" value="F:ribosome binding"/>
    <property type="evidence" value="ECO:0007669"/>
    <property type="project" value="TreeGrafter"/>
</dbReference>
<dbReference type="GO" id="GO:0042254">
    <property type="term" value="P:ribosome biogenesis"/>
    <property type="evidence" value="ECO:0007669"/>
    <property type="project" value="UniProtKB-KW"/>
</dbReference>
<dbReference type="CDD" id="cd01894">
    <property type="entry name" value="EngA1"/>
    <property type="match status" value="1"/>
</dbReference>
<dbReference type="CDD" id="cd01895">
    <property type="entry name" value="EngA2"/>
    <property type="match status" value="1"/>
</dbReference>
<dbReference type="FunFam" id="3.30.300.20:FF:000004">
    <property type="entry name" value="GTPase Der"/>
    <property type="match status" value="1"/>
</dbReference>
<dbReference type="FunFam" id="3.40.50.300:FF:000040">
    <property type="entry name" value="GTPase Der"/>
    <property type="match status" value="1"/>
</dbReference>
<dbReference type="FunFam" id="3.40.50.300:FF:001185">
    <property type="entry name" value="GTPase Der"/>
    <property type="match status" value="1"/>
</dbReference>
<dbReference type="Gene3D" id="3.30.300.20">
    <property type="match status" value="1"/>
</dbReference>
<dbReference type="Gene3D" id="3.40.50.300">
    <property type="entry name" value="P-loop containing nucleotide triphosphate hydrolases"/>
    <property type="match status" value="2"/>
</dbReference>
<dbReference type="HAMAP" id="MF_00195">
    <property type="entry name" value="GTPase_Der"/>
    <property type="match status" value="1"/>
</dbReference>
<dbReference type="InterPro" id="IPR031166">
    <property type="entry name" value="G_ENGA"/>
</dbReference>
<dbReference type="InterPro" id="IPR006073">
    <property type="entry name" value="GTP-bd"/>
</dbReference>
<dbReference type="InterPro" id="IPR016484">
    <property type="entry name" value="GTPase_Der"/>
</dbReference>
<dbReference type="InterPro" id="IPR032859">
    <property type="entry name" value="KH_dom-like"/>
</dbReference>
<dbReference type="InterPro" id="IPR015946">
    <property type="entry name" value="KH_dom-like_a/b"/>
</dbReference>
<dbReference type="InterPro" id="IPR027417">
    <property type="entry name" value="P-loop_NTPase"/>
</dbReference>
<dbReference type="InterPro" id="IPR005225">
    <property type="entry name" value="Small_GTP-bd"/>
</dbReference>
<dbReference type="NCBIfam" id="TIGR03594">
    <property type="entry name" value="GTPase_EngA"/>
    <property type="match status" value="1"/>
</dbReference>
<dbReference type="NCBIfam" id="TIGR00231">
    <property type="entry name" value="small_GTP"/>
    <property type="match status" value="2"/>
</dbReference>
<dbReference type="PANTHER" id="PTHR43834">
    <property type="entry name" value="GTPASE DER"/>
    <property type="match status" value="1"/>
</dbReference>
<dbReference type="PANTHER" id="PTHR43834:SF6">
    <property type="entry name" value="GTPASE DER"/>
    <property type="match status" value="1"/>
</dbReference>
<dbReference type="Pfam" id="PF14714">
    <property type="entry name" value="KH_dom-like"/>
    <property type="match status" value="1"/>
</dbReference>
<dbReference type="Pfam" id="PF01926">
    <property type="entry name" value="MMR_HSR1"/>
    <property type="match status" value="2"/>
</dbReference>
<dbReference type="PIRSF" id="PIRSF006485">
    <property type="entry name" value="GTP-binding_EngA"/>
    <property type="match status" value="1"/>
</dbReference>
<dbReference type="PRINTS" id="PR00326">
    <property type="entry name" value="GTP1OBG"/>
</dbReference>
<dbReference type="SUPFAM" id="SSF52540">
    <property type="entry name" value="P-loop containing nucleoside triphosphate hydrolases"/>
    <property type="match status" value="2"/>
</dbReference>
<dbReference type="PROSITE" id="PS51712">
    <property type="entry name" value="G_ENGA"/>
    <property type="match status" value="2"/>
</dbReference>
<evidence type="ECO:0000255" key="1">
    <source>
        <dbReference type="HAMAP-Rule" id="MF_00195"/>
    </source>
</evidence>
<feature type="chain" id="PRO_1000099149" description="GTPase Der">
    <location>
        <begin position="1"/>
        <end position="456"/>
    </location>
</feature>
<feature type="domain" description="EngA-type G 1">
    <location>
        <begin position="4"/>
        <end position="169"/>
    </location>
</feature>
<feature type="domain" description="EngA-type G 2">
    <location>
        <begin position="178"/>
        <end position="353"/>
    </location>
</feature>
<feature type="domain" description="KH-like" evidence="1">
    <location>
        <begin position="354"/>
        <end position="439"/>
    </location>
</feature>
<feature type="binding site" evidence="1">
    <location>
        <begin position="10"/>
        <end position="17"/>
    </location>
    <ligand>
        <name>GTP</name>
        <dbReference type="ChEBI" id="CHEBI:37565"/>
        <label>1</label>
    </ligand>
</feature>
<feature type="binding site" evidence="1">
    <location>
        <begin position="57"/>
        <end position="61"/>
    </location>
    <ligand>
        <name>GTP</name>
        <dbReference type="ChEBI" id="CHEBI:37565"/>
        <label>1</label>
    </ligand>
</feature>
<feature type="binding site" evidence="1">
    <location>
        <begin position="120"/>
        <end position="123"/>
    </location>
    <ligand>
        <name>GTP</name>
        <dbReference type="ChEBI" id="CHEBI:37565"/>
        <label>1</label>
    </ligand>
</feature>
<feature type="binding site" evidence="1">
    <location>
        <begin position="184"/>
        <end position="191"/>
    </location>
    <ligand>
        <name>GTP</name>
        <dbReference type="ChEBI" id="CHEBI:37565"/>
        <label>2</label>
    </ligand>
</feature>
<feature type="binding site" evidence="1">
    <location>
        <begin position="231"/>
        <end position="235"/>
    </location>
    <ligand>
        <name>GTP</name>
        <dbReference type="ChEBI" id="CHEBI:37565"/>
        <label>2</label>
    </ligand>
</feature>
<feature type="binding site" evidence="1">
    <location>
        <begin position="296"/>
        <end position="299"/>
    </location>
    <ligand>
        <name>GTP</name>
        <dbReference type="ChEBI" id="CHEBI:37565"/>
        <label>2</label>
    </ligand>
</feature>